<reference key="1">
    <citation type="submission" date="2008-05" db="EMBL/GenBank/DDBJ databases">
        <title>Complete sequence of Shigella boydii serotype 18 strain BS512.</title>
        <authorList>
            <person name="Rasko D.A."/>
            <person name="Rosovitz M."/>
            <person name="Maurelli A.T."/>
            <person name="Myers G."/>
            <person name="Seshadri R."/>
            <person name="Cer R."/>
            <person name="Jiang L."/>
            <person name="Ravel J."/>
            <person name="Sebastian Y."/>
        </authorList>
    </citation>
    <scope>NUCLEOTIDE SEQUENCE [LARGE SCALE GENOMIC DNA]</scope>
    <source>
        <strain>CDC 3083-94 / BS512</strain>
    </source>
</reference>
<accession>B2U2E0</accession>
<comment type="function">
    <text evidence="1">Catalyzes the specific phosphorylation of 1,6-anhydro-N-acetylmuramic acid (anhMurNAc) with the simultaneous cleavage of the 1,6-anhydro ring, generating MurNAc-6-P. Is required for the utilization of anhMurNAc either imported from the medium or derived from its own cell wall murein, and thus plays a role in cell wall recycling.</text>
</comment>
<comment type="catalytic activity">
    <reaction evidence="1">
        <text>1,6-anhydro-N-acetyl-beta-muramate + ATP + H2O = N-acetyl-D-muramate 6-phosphate + ADP + H(+)</text>
        <dbReference type="Rhea" id="RHEA:24952"/>
        <dbReference type="ChEBI" id="CHEBI:15377"/>
        <dbReference type="ChEBI" id="CHEBI:15378"/>
        <dbReference type="ChEBI" id="CHEBI:30616"/>
        <dbReference type="ChEBI" id="CHEBI:58690"/>
        <dbReference type="ChEBI" id="CHEBI:58722"/>
        <dbReference type="ChEBI" id="CHEBI:456216"/>
        <dbReference type="EC" id="2.7.1.170"/>
    </reaction>
</comment>
<comment type="pathway">
    <text evidence="1">Amino-sugar metabolism; 1,6-anhydro-N-acetylmuramate degradation.</text>
</comment>
<comment type="pathway">
    <text evidence="1">Cell wall biogenesis; peptidoglycan recycling.</text>
</comment>
<comment type="similarity">
    <text evidence="1">Belongs to the anhydro-N-acetylmuramic acid kinase family.</text>
</comment>
<gene>
    <name evidence="1" type="primary">anmK</name>
    <name type="ordered locus">SbBS512_E1832</name>
</gene>
<proteinExistence type="inferred from homology"/>
<protein>
    <recommendedName>
        <fullName evidence="1">Anhydro-N-acetylmuramic acid kinase</fullName>
        <ecNumber evidence="1">2.7.1.170</ecNumber>
    </recommendedName>
    <alternativeName>
        <fullName evidence="1">AnhMurNAc kinase</fullName>
    </alternativeName>
</protein>
<organism>
    <name type="scientific">Shigella boydii serotype 18 (strain CDC 3083-94 / BS512)</name>
    <dbReference type="NCBI Taxonomy" id="344609"/>
    <lineage>
        <taxon>Bacteria</taxon>
        <taxon>Pseudomonadati</taxon>
        <taxon>Pseudomonadota</taxon>
        <taxon>Gammaproteobacteria</taxon>
        <taxon>Enterobacterales</taxon>
        <taxon>Enterobacteriaceae</taxon>
        <taxon>Shigella</taxon>
    </lineage>
</organism>
<evidence type="ECO:0000255" key="1">
    <source>
        <dbReference type="HAMAP-Rule" id="MF_01270"/>
    </source>
</evidence>
<sequence length="369" mass="39524">MKSGRFIGVMSGTSLDGVDVVLATIDEHRVAQLASLSWPIPVSLKQAVLDICQGQQLTLSQFGQLDTQLGRLFADAVNALLKEQNLQARDIVAIGCHGQTVWHEPTGVAPHTLQIGDNNQIVARTGITVVGDFRRRDIALGGQGAPLVPAFHHALLAHPTERRMVLNIGGIANLSLLIPGQPVGGYDTGPGNMLMDAWIWRQAGKPYDKDAEWARAGKVILPLLQNMLSDPYFSQPAPKSTGREYFNYGWLERHLRHFPGVDPRDVQATLAELTAVTISEQVLLSGGCERLMVCGGGSRNPLLMARLAALLPGTEVTTTDAVGISGDDMEALAFAWLAWRTLAGLPGNLPSVTGASQETVLGAIFPANP</sequence>
<feature type="chain" id="PRO_1000140177" description="Anhydro-N-acetylmuramic acid kinase">
    <location>
        <begin position="1"/>
        <end position="369"/>
    </location>
</feature>
<feature type="binding site" evidence="1">
    <location>
        <begin position="12"/>
        <end position="19"/>
    </location>
    <ligand>
        <name>ATP</name>
        <dbReference type="ChEBI" id="CHEBI:30616"/>
    </ligand>
</feature>
<name>ANMK_SHIB3</name>
<dbReference type="EC" id="2.7.1.170" evidence="1"/>
<dbReference type="EMBL" id="CP001063">
    <property type="protein sequence ID" value="ACD07892.1"/>
    <property type="molecule type" value="Genomic_DNA"/>
</dbReference>
<dbReference type="RefSeq" id="WP_000835077.1">
    <property type="nucleotide sequence ID" value="NC_010658.1"/>
</dbReference>
<dbReference type="SMR" id="B2U2E0"/>
<dbReference type="STRING" id="344609.SbBS512_E1832"/>
<dbReference type="GeneID" id="93775794"/>
<dbReference type="KEGG" id="sbc:SbBS512_E1832"/>
<dbReference type="HOGENOM" id="CLU_038782_0_0_6"/>
<dbReference type="UniPathway" id="UPA00343"/>
<dbReference type="UniPathway" id="UPA00544"/>
<dbReference type="Proteomes" id="UP000001030">
    <property type="component" value="Chromosome"/>
</dbReference>
<dbReference type="GO" id="GO:0005524">
    <property type="term" value="F:ATP binding"/>
    <property type="evidence" value="ECO:0007669"/>
    <property type="project" value="UniProtKB-UniRule"/>
</dbReference>
<dbReference type="GO" id="GO:0016301">
    <property type="term" value="F:kinase activity"/>
    <property type="evidence" value="ECO:0007669"/>
    <property type="project" value="UniProtKB-KW"/>
</dbReference>
<dbReference type="GO" id="GO:0016773">
    <property type="term" value="F:phosphotransferase activity, alcohol group as acceptor"/>
    <property type="evidence" value="ECO:0007669"/>
    <property type="project" value="UniProtKB-UniRule"/>
</dbReference>
<dbReference type="GO" id="GO:0097175">
    <property type="term" value="P:1,6-anhydro-N-acetyl-beta-muramic acid catabolic process"/>
    <property type="evidence" value="ECO:0007669"/>
    <property type="project" value="UniProtKB-UniRule"/>
</dbReference>
<dbReference type="GO" id="GO:0006040">
    <property type="term" value="P:amino sugar metabolic process"/>
    <property type="evidence" value="ECO:0007669"/>
    <property type="project" value="InterPro"/>
</dbReference>
<dbReference type="GO" id="GO:0009254">
    <property type="term" value="P:peptidoglycan turnover"/>
    <property type="evidence" value="ECO:0007669"/>
    <property type="project" value="UniProtKB-UniRule"/>
</dbReference>
<dbReference type="CDD" id="cd24050">
    <property type="entry name" value="ASKHA_NBD_ANMK"/>
    <property type="match status" value="1"/>
</dbReference>
<dbReference type="FunFam" id="3.30.420.40:FF:000090">
    <property type="entry name" value="Anhydro-N-acetylmuramic acid kinase"/>
    <property type="match status" value="1"/>
</dbReference>
<dbReference type="Gene3D" id="3.30.420.40">
    <property type="match status" value="2"/>
</dbReference>
<dbReference type="HAMAP" id="MF_01270">
    <property type="entry name" value="AnhMurNAc_kinase"/>
    <property type="match status" value="1"/>
</dbReference>
<dbReference type="InterPro" id="IPR005338">
    <property type="entry name" value="Anhydro_N_Ac-Mur_kinase"/>
</dbReference>
<dbReference type="InterPro" id="IPR043129">
    <property type="entry name" value="ATPase_NBD"/>
</dbReference>
<dbReference type="NCBIfam" id="NF007138">
    <property type="entry name" value="PRK09585.1-1"/>
    <property type="match status" value="1"/>
</dbReference>
<dbReference type="NCBIfam" id="NF007139">
    <property type="entry name" value="PRK09585.1-3"/>
    <property type="match status" value="1"/>
</dbReference>
<dbReference type="NCBIfam" id="NF007148">
    <property type="entry name" value="PRK09585.3-2"/>
    <property type="match status" value="1"/>
</dbReference>
<dbReference type="PANTHER" id="PTHR30605">
    <property type="entry name" value="ANHYDRO-N-ACETYLMURAMIC ACID KINASE"/>
    <property type="match status" value="1"/>
</dbReference>
<dbReference type="PANTHER" id="PTHR30605:SF0">
    <property type="entry name" value="ANHYDRO-N-ACETYLMURAMIC ACID KINASE"/>
    <property type="match status" value="1"/>
</dbReference>
<dbReference type="Pfam" id="PF03702">
    <property type="entry name" value="AnmK"/>
    <property type="match status" value="1"/>
</dbReference>
<dbReference type="SUPFAM" id="SSF53067">
    <property type="entry name" value="Actin-like ATPase domain"/>
    <property type="match status" value="1"/>
</dbReference>
<keyword id="KW-0067">ATP-binding</keyword>
<keyword id="KW-0119">Carbohydrate metabolism</keyword>
<keyword id="KW-0418">Kinase</keyword>
<keyword id="KW-0547">Nucleotide-binding</keyword>
<keyword id="KW-1185">Reference proteome</keyword>
<keyword id="KW-0808">Transferase</keyword>